<protein>
    <recommendedName>
        <fullName>Ovomucoid</fullName>
    </recommendedName>
</protein>
<accession>P52245</accession>
<evidence type="ECO:0000255" key="1"/>
<evidence type="ECO:0000255" key="2">
    <source>
        <dbReference type="PROSITE-ProRule" id="PRU00798"/>
    </source>
</evidence>
<feature type="chain" id="PRO_0000073093" description="Ovomucoid">
    <location>
        <begin position="1" status="less than"/>
        <end position="56" status="greater than"/>
    </location>
</feature>
<feature type="domain" description="Kazal-like" evidence="2">
    <location>
        <begin position="6"/>
        <end position="56"/>
    </location>
</feature>
<feature type="site" description="Reactive bond 3">
    <location>
        <begin position="18"/>
        <end position="19"/>
    </location>
</feature>
<feature type="glycosylation site" description="N-linked (GlcNAc...) asparagine" evidence="1">
    <location>
        <position position="45"/>
    </location>
</feature>
<feature type="disulfide bond">
    <location>
        <begin position="8"/>
        <end position="38"/>
    </location>
</feature>
<feature type="disulfide bond">
    <location>
        <begin position="16"/>
        <end position="35"/>
    </location>
</feature>
<feature type="disulfide bond">
    <location>
        <begin position="24"/>
        <end position="56"/>
    </location>
</feature>
<feature type="non-terminal residue">
    <location>
        <position position="1"/>
    </location>
</feature>
<feature type="non-terminal residue">
    <location>
        <position position="56"/>
    </location>
</feature>
<organism>
    <name type="scientific">Crossoptilon crossoptilon</name>
    <name type="common">White-eared pheasant</name>
    <name type="synonym">Phasianus crossoptilon</name>
    <dbReference type="NCBI Taxonomy" id="30408"/>
    <lineage>
        <taxon>Eukaryota</taxon>
        <taxon>Metazoa</taxon>
        <taxon>Chordata</taxon>
        <taxon>Craniata</taxon>
        <taxon>Vertebrata</taxon>
        <taxon>Euteleostomi</taxon>
        <taxon>Archelosauria</taxon>
        <taxon>Archosauria</taxon>
        <taxon>Dinosauria</taxon>
        <taxon>Saurischia</taxon>
        <taxon>Theropoda</taxon>
        <taxon>Coelurosauria</taxon>
        <taxon>Aves</taxon>
        <taxon>Neognathae</taxon>
        <taxon>Galloanserae</taxon>
        <taxon>Galliformes</taxon>
        <taxon>Phasianidae</taxon>
        <taxon>Phasianinae</taxon>
        <taxon>Crossoptilon</taxon>
    </lineage>
</organism>
<name>IOVO_CROCS</name>
<dbReference type="PIR" id="H61589">
    <property type="entry name" value="H61589"/>
</dbReference>
<dbReference type="PDB" id="1M8B">
    <property type="method" value="NMR"/>
    <property type="chains" value="A=1-56"/>
</dbReference>
<dbReference type="PDB" id="1M8C">
    <property type="method" value="NMR"/>
    <property type="chains" value="A=1-56"/>
</dbReference>
<dbReference type="PDBsum" id="1M8B"/>
<dbReference type="PDBsum" id="1M8C"/>
<dbReference type="BMRB" id="P52245"/>
<dbReference type="SMR" id="P52245"/>
<dbReference type="GO" id="GO:0005615">
    <property type="term" value="C:extracellular space"/>
    <property type="evidence" value="ECO:0007669"/>
    <property type="project" value="UniProtKB-ARBA"/>
</dbReference>
<dbReference type="GO" id="GO:0004867">
    <property type="term" value="F:serine-type endopeptidase inhibitor activity"/>
    <property type="evidence" value="ECO:0007669"/>
    <property type="project" value="UniProtKB-KW"/>
</dbReference>
<dbReference type="CDD" id="cd00104">
    <property type="entry name" value="KAZAL_FS"/>
    <property type="match status" value="1"/>
</dbReference>
<dbReference type="FunFam" id="3.30.60.30:FF:000037">
    <property type="entry name" value="Ovomucoid"/>
    <property type="match status" value="1"/>
</dbReference>
<dbReference type="Gene3D" id="3.30.60.30">
    <property type="match status" value="1"/>
</dbReference>
<dbReference type="InterPro" id="IPR051597">
    <property type="entry name" value="Bifunctional_prot_inhibitor"/>
</dbReference>
<dbReference type="InterPro" id="IPR002350">
    <property type="entry name" value="Kazal_dom"/>
</dbReference>
<dbReference type="InterPro" id="IPR036058">
    <property type="entry name" value="Kazal_dom_sf"/>
</dbReference>
<dbReference type="InterPro" id="IPR001239">
    <property type="entry name" value="Prot_inh_Kazal-m"/>
</dbReference>
<dbReference type="PANTHER" id="PTHR47729:SF1">
    <property type="entry name" value="OVOMUCOID-LIKE-RELATED"/>
    <property type="match status" value="1"/>
</dbReference>
<dbReference type="PANTHER" id="PTHR47729">
    <property type="entry name" value="SERINE PEPTIDASE INHIBITOR, KAZAL TYPE 2, TANDEM DUPLICATE 1-RELATED"/>
    <property type="match status" value="1"/>
</dbReference>
<dbReference type="Pfam" id="PF00050">
    <property type="entry name" value="Kazal_1"/>
    <property type="match status" value="1"/>
</dbReference>
<dbReference type="PRINTS" id="PR00290">
    <property type="entry name" value="KAZALINHBTR"/>
</dbReference>
<dbReference type="SMART" id="SM00280">
    <property type="entry name" value="KAZAL"/>
    <property type="match status" value="1"/>
</dbReference>
<dbReference type="SUPFAM" id="SSF100895">
    <property type="entry name" value="Kazal-type serine protease inhibitors"/>
    <property type="match status" value="1"/>
</dbReference>
<dbReference type="PROSITE" id="PS00282">
    <property type="entry name" value="KAZAL_1"/>
    <property type="match status" value="1"/>
</dbReference>
<dbReference type="PROSITE" id="PS51465">
    <property type="entry name" value="KAZAL_2"/>
    <property type="match status" value="1"/>
</dbReference>
<keyword id="KW-0002">3D-structure</keyword>
<keyword id="KW-0903">Direct protein sequencing</keyword>
<keyword id="KW-1015">Disulfide bond</keyword>
<keyword id="KW-0325">Glycoprotein</keyword>
<keyword id="KW-0646">Protease inhibitor</keyword>
<keyword id="KW-0677">Repeat</keyword>
<keyword id="KW-0964">Secreted</keyword>
<keyword id="KW-0722">Serine protease inhibitor</keyword>
<proteinExistence type="evidence at protein level"/>
<sequence>LAAVSVDCSEYPKPACTLEYRPLCGSDNKTYGNKCNFCNAVVESNGTLTLSHFGKC</sequence>
<reference key="1">
    <citation type="journal article" date="1993" name="J. Protein Chem.">
        <title>Amino acid sequences of ovomucoid third domains from 27 additional species of birds.</title>
        <authorList>
            <person name="Apostol I."/>
            <person name="Giletto A."/>
            <person name="Komiyama T."/>
            <person name="Zhang W."/>
            <person name="Laskowski M. Jr."/>
        </authorList>
    </citation>
    <scope>PROTEIN SEQUENCE</scope>
</reference>
<comment type="subcellular location">
    <subcellularLocation>
        <location>Secreted</location>
    </subcellularLocation>
</comment>
<comment type="domain">
    <text>Avian ovomucoid consists of three homologous, tandem Kazal family inhibitory domains.</text>
</comment>